<name>SYS_AZOSB</name>
<dbReference type="EC" id="6.1.1.11" evidence="1"/>
<dbReference type="EMBL" id="AM406670">
    <property type="protein sequence ID" value="CAL93986.1"/>
    <property type="molecule type" value="Genomic_DNA"/>
</dbReference>
<dbReference type="RefSeq" id="WP_011765102.1">
    <property type="nucleotide sequence ID" value="NC_008702.1"/>
</dbReference>
<dbReference type="SMR" id="A1K581"/>
<dbReference type="STRING" id="62928.azo1369"/>
<dbReference type="KEGG" id="azo:azo1369"/>
<dbReference type="eggNOG" id="COG0172">
    <property type="taxonomic scope" value="Bacteria"/>
</dbReference>
<dbReference type="HOGENOM" id="CLU_023797_1_1_4"/>
<dbReference type="UniPathway" id="UPA00906">
    <property type="reaction ID" value="UER00895"/>
</dbReference>
<dbReference type="Proteomes" id="UP000002588">
    <property type="component" value="Chromosome"/>
</dbReference>
<dbReference type="GO" id="GO:0005737">
    <property type="term" value="C:cytoplasm"/>
    <property type="evidence" value="ECO:0007669"/>
    <property type="project" value="UniProtKB-SubCell"/>
</dbReference>
<dbReference type="GO" id="GO:0005524">
    <property type="term" value="F:ATP binding"/>
    <property type="evidence" value="ECO:0007669"/>
    <property type="project" value="UniProtKB-UniRule"/>
</dbReference>
<dbReference type="GO" id="GO:0004828">
    <property type="term" value="F:serine-tRNA ligase activity"/>
    <property type="evidence" value="ECO:0007669"/>
    <property type="project" value="UniProtKB-UniRule"/>
</dbReference>
<dbReference type="GO" id="GO:0016260">
    <property type="term" value="P:selenocysteine biosynthetic process"/>
    <property type="evidence" value="ECO:0007669"/>
    <property type="project" value="UniProtKB-UniRule"/>
</dbReference>
<dbReference type="GO" id="GO:0006434">
    <property type="term" value="P:seryl-tRNA aminoacylation"/>
    <property type="evidence" value="ECO:0007669"/>
    <property type="project" value="UniProtKB-UniRule"/>
</dbReference>
<dbReference type="CDD" id="cd00770">
    <property type="entry name" value="SerRS_core"/>
    <property type="match status" value="1"/>
</dbReference>
<dbReference type="Gene3D" id="3.30.930.10">
    <property type="entry name" value="Bira Bifunctional Protein, Domain 2"/>
    <property type="match status" value="1"/>
</dbReference>
<dbReference type="Gene3D" id="1.10.287.40">
    <property type="entry name" value="Serine-tRNA synthetase, tRNA binding domain"/>
    <property type="match status" value="1"/>
</dbReference>
<dbReference type="HAMAP" id="MF_00176">
    <property type="entry name" value="Ser_tRNA_synth_type1"/>
    <property type="match status" value="1"/>
</dbReference>
<dbReference type="InterPro" id="IPR002314">
    <property type="entry name" value="aa-tRNA-synt_IIb"/>
</dbReference>
<dbReference type="InterPro" id="IPR006195">
    <property type="entry name" value="aa-tRNA-synth_II"/>
</dbReference>
<dbReference type="InterPro" id="IPR045864">
    <property type="entry name" value="aa-tRNA-synth_II/BPL/LPL"/>
</dbReference>
<dbReference type="InterPro" id="IPR002317">
    <property type="entry name" value="Ser-tRNA-ligase_type_1"/>
</dbReference>
<dbReference type="InterPro" id="IPR015866">
    <property type="entry name" value="Ser-tRNA-synth_1_N"/>
</dbReference>
<dbReference type="InterPro" id="IPR042103">
    <property type="entry name" value="SerRS_1_N_sf"/>
</dbReference>
<dbReference type="InterPro" id="IPR033729">
    <property type="entry name" value="SerRS_core"/>
</dbReference>
<dbReference type="InterPro" id="IPR010978">
    <property type="entry name" value="tRNA-bd_arm"/>
</dbReference>
<dbReference type="NCBIfam" id="TIGR00414">
    <property type="entry name" value="serS"/>
    <property type="match status" value="1"/>
</dbReference>
<dbReference type="PANTHER" id="PTHR43697:SF1">
    <property type="entry name" value="SERINE--TRNA LIGASE"/>
    <property type="match status" value="1"/>
</dbReference>
<dbReference type="PANTHER" id="PTHR43697">
    <property type="entry name" value="SERYL-TRNA SYNTHETASE"/>
    <property type="match status" value="1"/>
</dbReference>
<dbReference type="Pfam" id="PF02403">
    <property type="entry name" value="Seryl_tRNA_N"/>
    <property type="match status" value="1"/>
</dbReference>
<dbReference type="Pfam" id="PF00587">
    <property type="entry name" value="tRNA-synt_2b"/>
    <property type="match status" value="1"/>
</dbReference>
<dbReference type="PIRSF" id="PIRSF001529">
    <property type="entry name" value="Ser-tRNA-synth_IIa"/>
    <property type="match status" value="1"/>
</dbReference>
<dbReference type="PRINTS" id="PR00981">
    <property type="entry name" value="TRNASYNTHSER"/>
</dbReference>
<dbReference type="SUPFAM" id="SSF55681">
    <property type="entry name" value="Class II aaRS and biotin synthetases"/>
    <property type="match status" value="1"/>
</dbReference>
<dbReference type="SUPFAM" id="SSF46589">
    <property type="entry name" value="tRNA-binding arm"/>
    <property type="match status" value="1"/>
</dbReference>
<dbReference type="PROSITE" id="PS50862">
    <property type="entry name" value="AA_TRNA_LIGASE_II"/>
    <property type="match status" value="1"/>
</dbReference>
<reference key="1">
    <citation type="journal article" date="2006" name="Nat. Biotechnol.">
        <title>Complete genome of the mutualistic, N2-fixing grass endophyte Azoarcus sp. strain BH72.</title>
        <authorList>
            <person name="Krause A."/>
            <person name="Ramakumar A."/>
            <person name="Bartels D."/>
            <person name="Battistoni F."/>
            <person name="Bekel T."/>
            <person name="Boch J."/>
            <person name="Boehm M."/>
            <person name="Friedrich F."/>
            <person name="Hurek T."/>
            <person name="Krause L."/>
            <person name="Linke B."/>
            <person name="McHardy A.C."/>
            <person name="Sarkar A."/>
            <person name="Schneiker S."/>
            <person name="Syed A.A."/>
            <person name="Thauer R."/>
            <person name="Vorhoelter F.-J."/>
            <person name="Weidner S."/>
            <person name="Puehler A."/>
            <person name="Reinhold-Hurek B."/>
            <person name="Kaiser O."/>
            <person name="Goesmann A."/>
        </authorList>
    </citation>
    <scope>NUCLEOTIDE SEQUENCE [LARGE SCALE GENOMIC DNA]</scope>
    <source>
        <strain>BH72</strain>
    </source>
</reference>
<evidence type="ECO:0000255" key="1">
    <source>
        <dbReference type="HAMAP-Rule" id="MF_00176"/>
    </source>
</evidence>
<comment type="function">
    <text evidence="1">Catalyzes the attachment of serine to tRNA(Ser). Is also able to aminoacylate tRNA(Sec) with serine, to form the misacylated tRNA L-seryl-tRNA(Sec), which will be further converted into selenocysteinyl-tRNA(Sec).</text>
</comment>
<comment type="catalytic activity">
    <reaction evidence="1">
        <text>tRNA(Ser) + L-serine + ATP = L-seryl-tRNA(Ser) + AMP + diphosphate + H(+)</text>
        <dbReference type="Rhea" id="RHEA:12292"/>
        <dbReference type="Rhea" id="RHEA-COMP:9669"/>
        <dbReference type="Rhea" id="RHEA-COMP:9703"/>
        <dbReference type="ChEBI" id="CHEBI:15378"/>
        <dbReference type="ChEBI" id="CHEBI:30616"/>
        <dbReference type="ChEBI" id="CHEBI:33019"/>
        <dbReference type="ChEBI" id="CHEBI:33384"/>
        <dbReference type="ChEBI" id="CHEBI:78442"/>
        <dbReference type="ChEBI" id="CHEBI:78533"/>
        <dbReference type="ChEBI" id="CHEBI:456215"/>
        <dbReference type="EC" id="6.1.1.11"/>
    </reaction>
</comment>
<comment type="catalytic activity">
    <reaction evidence="1">
        <text>tRNA(Sec) + L-serine + ATP = L-seryl-tRNA(Sec) + AMP + diphosphate + H(+)</text>
        <dbReference type="Rhea" id="RHEA:42580"/>
        <dbReference type="Rhea" id="RHEA-COMP:9742"/>
        <dbReference type="Rhea" id="RHEA-COMP:10128"/>
        <dbReference type="ChEBI" id="CHEBI:15378"/>
        <dbReference type="ChEBI" id="CHEBI:30616"/>
        <dbReference type="ChEBI" id="CHEBI:33019"/>
        <dbReference type="ChEBI" id="CHEBI:33384"/>
        <dbReference type="ChEBI" id="CHEBI:78442"/>
        <dbReference type="ChEBI" id="CHEBI:78533"/>
        <dbReference type="ChEBI" id="CHEBI:456215"/>
        <dbReference type="EC" id="6.1.1.11"/>
    </reaction>
</comment>
<comment type="pathway">
    <text evidence="1">Aminoacyl-tRNA biosynthesis; selenocysteinyl-tRNA(Sec) biosynthesis; L-seryl-tRNA(Sec) from L-serine and tRNA(Sec): step 1/1.</text>
</comment>
<comment type="subunit">
    <text evidence="1">Homodimer. The tRNA molecule binds across the dimer.</text>
</comment>
<comment type="subcellular location">
    <subcellularLocation>
        <location evidence="1">Cytoplasm</location>
    </subcellularLocation>
</comment>
<comment type="domain">
    <text evidence="1">Consists of two distinct domains, a catalytic core and a N-terminal extension that is involved in tRNA binding.</text>
</comment>
<comment type="similarity">
    <text evidence="1">Belongs to the class-II aminoacyl-tRNA synthetase family. Type-1 seryl-tRNA synthetase subfamily.</text>
</comment>
<feature type="chain" id="PRO_1000019614" description="Serine--tRNA ligase">
    <location>
        <begin position="1"/>
        <end position="430"/>
    </location>
</feature>
<feature type="binding site" evidence="1">
    <location>
        <begin position="235"/>
        <end position="237"/>
    </location>
    <ligand>
        <name>L-serine</name>
        <dbReference type="ChEBI" id="CHEBI:33384"/>
    </ligand>
</feature>
<feature type="binding site" evidence="1">
    <location>
        <begin position="266"/>
        <end position="268"/>
    </location>
    <ligand>
        <name>ATP</name>
        <dbReference type="ChEBI" id="CHEBI:30616"/>
    </ligand>
</feature>
<feature type="binding site" evidence="1">
    <location>
        <position position="289"/>
    </location>
    <ligand>
        <name>L-serine</name>
        <dbReference type="ChEBI" id="CHEBI:33384"/>
    </ligand>
</feature>
<feature type="binding site" evidence="1">
    <location>
        <begin position="353"/>
        <end position="356"/>
    </location>
    <ligand>
        <name>ATP</name>
        <dbReference type="ChEBI" id="CHEBI:30616"/>
    </ligand>
</feature>
<feature type="binding site" evidence="1">
    <location>
        <position position="388"/>
    </location>
    <ligand>
        <name>L-serine</name>
        <dbReference type="ChEBI" id="CHEBI:33384"/>
    </ligand>
</feature>
<protein>
    <recommendedName>
        <fullName evidence="1">Serine--tRNA ligase</fullName>
        <ecNumber evidence="1">6.1.1.11</ecNumber>
    </recommendedName>
    <alternativeName>
        <fullName evidence="1">Seryl-tRNA synthetase</fullName>
        <shortName evidence="1">SerRS</shortName>
    </alternativeName>
    <alternativeName>
        <fullName evidence="1">Seryl-tRNA(Ser/Sec) synthetase</fullName>
    </alternativeName>
</protein>
<accession>A1K581</accession>
<sequence>MLDIQLLRGQLSQVAERLALRGVTLDSGAFTALEDERKQLQTRTQELQAKRNALSKQIGILKGKGEDASAVMAEVGQLGDELKACEQALPVVLEKLNAFLAGLPNLPQEGVPVGEDETGNVEVRRWGTPRSFDFEVKDHVDLGAALGLDFDTGAKLSGSRFTFMRGQIARLHRALAQFMLDTQTLEHGYTECYAPYIVNREVLVGTGQLPKFKEDMFWVLRGGDEEGGEQYLISTSEIPLTNTVREQILAADALPIKLTAHSPCFRSEAGSAGRDTRGMIRQHQFDKVEMVQIVHPDASNAALEEMVGHAEAILQKLELPYRVITLCTGDMGFSAAKTYDLEVWLPAQNTYREISSCSNCEAFQARRMQARFKTAQGKNELVHTLNGSGLAVGRTLVAVLENYQQADGSIVVPKALVPYMGGLEVLRPAS</sequence>
<organism>
    <name type="scientific">Azoarcus sp. (strain BH72)</name>
    <dbReference type="NCBI Taxonomy" id="418699"/>
    <lineage>
        <taxon>Bacteria</taxon>
        <taxon>Pseudomonadati</taxon>
        <taxon>Pseudomonadota</taxon>
        <taxon>Betaproteobacteria</taxon>
        <taxon>Rhodocyclales</taxon>
        <taxon>Zoogloeaceae</taxon>
        <taxon>Azoarcus</taxon>
    </lineage>
</organism>
<keyword id="KW-0030">Aminoacyl-tRNA synthetase</keyword>
<keyword id="KW-0067">ATP-binding</keyword>
<keyword id="KW-0963">Cytoplasm</keyword>
<keyword id="KW-0436">Ligase</keyword>
<keyword id="KW-0547">Nucleotide-binding</keyword>
<keyword id="KW-0648">Protein biosynthesis</keyword>
<keyword id="KW-1185">Reference proteome</keyword>
<gene>
    <name evidence="1" type="primary">serS</name>
    <name type="ordered locus">azo1369</name>
</gene>
<proteinExistence type="inferred from homology"/>